<reference key="1">
    <citation type="journal article" date="2002" name="Nature">
        <title>Complete genome sequence of the model actinomycete Streptomyces coelicolor A3(2).</title>
        <authorList>
            <person name="Bentley S.D."/>
            <person name="Chater K.F."/>
            <person name="Cerdeno-Tarraga A.-M."/>
            <person name="Challis G.L."/>
            <person name="Thomson N.R."/>
            <person name="James K.D."/>
            <person name="Harris D.E."/>
            <person name="Quail M.A."/>
            <person name="Kieser H."/>
            <person name="Harper D."/>
            <person name="Bateman A."/>
            <person name="Brown S."/>
            <person name="Chandra G."/>
            <person name="Chen C.W."/>
            <person name="Collins M."/>
            <person name="Cronin A."/>
            <person name="Fraser A."/>
            <person name="Goble A."/>
            <person name="Hidalgo J."/>
            <person name="Hornsby T."/>
            <person name="Howarth S."/>
            <person name="Huang C.-H."/>
            <person name="Kieser T."/>
            <person name="Larke L."/>
            <person name="Murphy L.D."/>
            <person name="Oliver K."/>
            <person name="O'Neil S."/>
            <person name="Rabbinowitsch E."/>
            <person name="Rajandream M.A."/>
            <person name="Rutherford K.M."/>
            <person name="Rutter S."/>
            <person name="Seeger K."/>
            <person name="Saunders D."/>
            <person name="Sharp S."/>
            <person name="Squares R."/>
            <person name="Squares S."/>
            <person name="Taylor K."/>
            <person name="Warren T."/>
            <person name="Wietzorrek A."/>
            <person name="Woodward J.R."/>
            <person name="Barrell B.G."/>
            <person name="Parkhill J."/>
            <person name="Hopwood D.A."/>
        </authorList>
    </citation>
    <scope>NUCLEOTIDE SEQUENCE [LARGE SCALE GENOMIC DNA]</scope>
    <source>
        <strain>ATCC BAA-471 / A3(2) / M145</strain>
    </source>
</reference>
<sequence length="378" mass="40488">MATDYYAVLGVRRDASQDEIKKAFRRLARELHPDVNPDPKTQERFKEINAAYEVLSDPQKKQVYDLGGDPLSQAAGGGAGGFGAGGFGNFSDIMDAFFGTASQRGPRSRTRRGQDAMIRIEVELDEAAFGTTKDIQVDTAVVCNTCNGEGAAPGTSAQTCDMCRGRGEVSQVTRSFLGQVMTSRPCPQCQGFGTVVPTPCPECAGDGRVRSRRTLTVKIPAGVDNGTRIQLAGEGEVGPGGGPAGDLYVEIHELPHSTFQRRGDDLHCTVTIPMTAAALGTKVPLETLDGMEEVDIRPGTQSGQSIPKHGRGVTHLRGGGRGDLIVHVEVTTPGKLDPEQERLLRELAKLRGEERPTGQFQPGQQGLFSRLKDAFNGR</sequence>
<comment type="function">
    <text evidence="1">Participates actively in the response to hyperosmotic and heat shock by preventing the aggregation of stress-denatured proteins and by disaggregating proteins, also in an autonomous, DnaK-independent fashion. Unfolded proteins bind initially to DnaJ; upon interaction with the DnaJ-bound protein, DnaK hydrolyzes its bound ATP, resulting in the formation of a stable complex. GrpE releases ADP from DnaK; ATP binding to DnaK triggers the release of the substrate protein, thus completing the reaction cycle. Several rounds of ATP-dependent interactions between DnaJ, DnaK and GrpE are required for fully efficient folding. Also involved, together with DnaK and GrpE, in the DNA replication of plasmids through activation of initiation proteins.</text>
</comment>
<comment type="cofactor">
    <cofactor evidence="1">
        <name>Zn(2+)</name>
        <dbReference type="ChEBI" id="CHEBI:29105"/>
    </cofactor>
    <text evidence="1">Binds 2 Zn(2+) ions per monomer.</text>
</comment>
<comment type="subunit">
    <text evidence="1">Homodimer.</text>
</comment>
<comment type="subcellular location">
    <subcellularLocation>
        <location evidence="1">Cytoplasm</location>
    </subcellularLocation>
</comment>
<comment type="domain">
    <text evidence="1">The J domain is necessary and sufficient to stimulate DnaK ATPase activity. Zinc center 1 plays an important role in the autonomous, DnaK-independent chaperone activity of DnaJ. Zinc center 2 is essential for interaction with DnaK and for DnaJ activity.</text>
</comment>
<comment type="similarity">
    <text evidence="1">Belongs to the DnaJ family.</text>
</comment>
<name>DNAJ2_STRCO</name>
<keyword id="KW-0143">Chaperone</keyword>
<keyword id="KW-0963">Cytoplasm</keyword>
<keyword id="KW-0235">DNA replication</keyword>
<keyword id="KW-0479">Metal-binding</keyword>
<keyword id="KW-1185">Reference proteome</keyword>
<keyword id="KW-0677">Repeat</keyword>
<keyword id="KW-0346">Stress response</keyword>
<keyword id="KW-0862">Zinc</keyword>
<keyword id="KW-0863">Zinc-finger</keyword>
<accession>Q9RDD7</accession>
<dbReference type="EMBL" id="AL939113">
    <property type="protein sequence ID" value="CAB66232.1"/>
    <property type="molecule type" value="Genomic_DNA"/>
</dbReference>
<dbReference type="RefSeq" id="NP_626792.1">
    <property type="nucleotide sequence ID" value="NC_003888.3"/>
</dbReference>
<dbReference type="SMR" id="Q9RDD7"/>
<dbReference type="FunCoup" id="Q9RDD7">
    <property type="interactions" value="433"/>
</dbReference>
<dbReference type="STRING" id="100226.gene:17760156"/>
<dbReference type="PaxDb" id="100226-SCO2554"/>
<dbReference type="KEGG" id="sco:SCO2554"/>
<dbReference type="PATRIC" id="fig|100226.15.peg.2599"/>
<dbReference type="eggNOG" id="COG0484">
    <property type="taxonomic scope" value="Bacteria"/>
</dbReference>
<dbReference type="HOGENOM" id="CLU_017633_0_7_11"/>
<dbReference type="InParanoid" id="Q9RDD7"/>
<dbReference type="OrthoDB" id="9779889at2"/>
<dbReference type="PhylomeDB" id="Q9RDD7"/>
<dbReference type="Proteomes" id="UP000001973">
    <property type="component" value="Chromosome"/>
</dbReference>
<dbReference type="GO" id="GO:0005737">
    <property type="term" value="C:cytoplasm"/>
    <property type="evidence" value="ECO:0000318"/>
    <property type="project" value="GO_Central"/>
</dbReference>
<dbReference type="GO" id="GO:0005524">
    <property type="term" value="F:ATP binding"/>
    <property type="evidence" value="ECO:0007669"/>
    <property type="project" value="InterPro"/>
</dbReference>
<dbReference type="GO" id="GO:0031072">
    <property type="term" value="F:heat shock protein binding"/>
    <property type="evidence" value="ECO:0007669"/>
    <property type="project" value="InterPro"/>
</dbReference>
<dbReference type="GO" id="GO:0051082">
    <property type="term" value="F:unfolded protein binding"/>
    <property type="evidence" value="ECO:0000318"/>
    <property type="project" value="GO_Central"/>
</dbReference>
<dbReference type="GO" id="GO:0008270">
    <property type="term" value="F:zinc ion binding"/>
    <property type="evidence" value="ECO:0007669"/>
    <property type="project" value="UniProtKB-UniRule"/>
</dbReference>
<dbReference type="GO" id="GO:0051085">
    <property type="term" value="P:chaperone cofactor-dependent protein refolding"/>
    <property type="evidence" value="ECO:0000318"/>
    <property type="project" value="GO_Central"/>
</dbReference>
<dbReference type="GO" id="GO:0006260">
    <property type="term" value="P:DNA replication"/>
    <property type="evidence" value="ECO:0007669"/>
    <property type="project" value="UniProtKB-KW"/>
</dbReference>
<dbReference type="GO" id="GO:0042026">
    <property type="term" value="P:protein refolding"/>
    <property type="evidence" value="ECO:0000318"/>
    <property type="project" value="GO_Central"/>
</dbReference>
<dbReference type="GO" id="GO:0009408">
    <property type="term" value="P:response to heat"/>
    <property type="evidence" value="ECO:0007669"/>
    <property type="project" value="InterPro"/>
</dbReference>
<dbReference type="CDD" id="cd06257">
    <property type="entry name" value="DnaJ"/>
    <property type="match status" value="1"/>
</dbReference>
<dbReference type="CDD" id="cd10747">
    <property type="entry name" value="DnaJ_C"/>
    <property type="match status" value="1"/>
</dbReference>
<dbReference type="CDD" id="cd10719">
    <property type="entry name" value="DnaJ_zf"/>
    <property type="match status" value="1"/>
</dbReference>
<dbReference type="FunFam" id="1.10.287.110:FF:000010">
    <property type="entry name" value="Molecular chaperone DnaJ"/>
    <property type="match status" value="1"/>
</dbReference>
<dbReference type="FunFam" id="2.10.230.10:FF:000004">
    <property type="entry name" value="Molecular chaperone DnaJ"/>
    <property type="match status" value="1"/>
</dbReference>
<dbReference type="FunFam" id="2.60.260.20:FF:000023">
    <property type="entry name" value="Molecular chaperone DnaJ"/>
    <property type="match status" value="1"/>
</dbReference>
<dbReference type="Gene3D" id="1.10.287.110">
    <property type="entry name" value="DnaJ domain"/>
    <property type="match status" value="1"/>
</dbReference>
<dbReference type="Gene3D" id="2.10.230.10">
    <property type="entry name" value="Heat shock protein DnaJ, cysteine-rich domain"/>
    <property type="match status" value="1"/>
</dbReference>
<dbReference type="Gene3D" id="2.60.260.20">
    <property type="entry name" value="Urease metallochaperone UreE, N-terminal domain"/>
    <property type="match status" value="2"/>
</dbReference>
<dbReference type="HAMAP" id="MF_01152">
    <property type="entry name" value="DnaJ"/>
    <property type="match status" value="1"/>
</dbReference>
<dbReference type="InterPro" id="IPR012724">
    <property type="entry name" value="DnaJ"/>
</dbReference>
<dbReference type="InterPro" id="IPR002939">
    <property type="entry name" value="DnaJ_C"/>
</dbReference>
<dbReference type="InterPro" id="IPR001623">
    <property type="entry name" value="DnaJ_domain"/>
</dbReference>
<dbReference type="InterPro" id="IPR018253">
    <property type="entry name" value="DnaJ_domain_CS"/>
</dbReference>
<dbReference type="InterPro" id="IPR008971">
    <property type="entry name" value="HSP40/DnaJ_pept-bd"/>
</dbReference>
<dbReference type="InterPro" id="IPR001305">
    <property type="entry name" value="HSP_DnaJ_Cys-rich_dom"/>
</dbReference>
<dbReference type="InterPro" id="IPR036410">
    <property type="entry name" value="HSP_DnaJ_Cys-rich_dom_sf"/>
</dbReference>
<dbReference type="InterPro" id="IPR036869">
    <property type="entry name" value="J_dom_sf"/>
</dbReference>
<dbReference type="NCBIfam" id="TIGR02349">
    <property type="entry name" value="DnaJ_bact"/>
    <property type="match status" value="1"/>
</dbReference>
<dbReference type="NCBIfam" id="NF008035">
    <property type="entry name" value="PRK10767.1"/>
    <property type="match status" value="1"/>
</dbReference>
<dbReference type="NCBIfam" id="NF010871">
    <property type="entry name" value="PRK14278.1"/>
    <property type="match status" value="1"/>
</dbReference>
<dbReference type="PANTHER" id="PTHR43096:SF48">
    <property type="entry name" value="CHAPERONE PROTEIN DNAJ"/>
    <property type="match status" value="1"/>
</dbReference>
<dbReference type="PANTHER" id="PTHR43096">
    <property type="entry name" value="DNAJ HOMOLOG 1, MITOCHONDRIAL-RELATED"/>
    <property type="match status" value="1"/>
</dbReference>
<dbReference type="Pfam" id="PF00226">
    <property type="entry name" value="DnaJ"/>
    <property type="match status" value="1"/>
</dbReference>
<dbReference type="Pfam" id="PF01556">
    <property type="entry name" value="DnaJ_C"/>
    <property type="match status" value="1"/>
</dbReference>
<dbReference type="Pfam" id="PF00684">
    <property type="entry name" value="DnaJ_CXXCXGXG"/>
    <property type="match status" value="1"/>
</dbReference>
<dbReference type="PRINTS" id="PR00625">
    <property type="entry name" value="JDOMAIN"/>
</dbReference>
<dbReference type="SMART" id="SM00271">
    <property type="entry name" value="DnaJ"/>
    <property type="match status" value="1"/>
</dbReference>
<dbReference type="SUPFAM" id="SSF46565">
    <property type="entry name" value="Chaperone J-domain"/>
    <property type="match status" value="1"/>
</dbReference>
<dbReference type="SUPFAM" id="SSF57938">
    <property type="entry name" value="DnaJ/Hsp40 cysteine-rich domain"/>
    <property type="match status" value="1"/>
</dbReference>
<dbReference type="SUPFAM" id="SSF49493">
    <property type="entry name" value="HSP40/DnaJ peptide-binding domain"/>
    <property type="match status" value="2"/>
</dbReference>
<dbReference type="PROSITE" id="PS00636">
    <property type="entry name" value="DNAJ_1"/>
    <property type="match status" value="1"/>
</dbReference>
<dbReference type="PROSITE" id="PS50076">
    <property type="entry name" value="DNAJ_2"/>
    <property type="match status" value="1"/>
</dbReference>
<dbReference type="PROSITE" id="PS51188">
    <property type="entry name" value="ZF_CR"/>
    <property type="match status" value="1"/>
</dbReference>
<protein>
    <recommendedName>
        <fullName evidence="1">Chaperone protein DnaJ 2</fullName>
    </recommendedName>
</protein>
<proteinExistence type="inferred from homology"/>
<organism>
    <name type="scientific">Streptomyces coelicolor (strain ATCC BAA-471 / A3(2) / M145)</name>
    <dbReference type="NCBI Taxonomy" id="100226"/>
    <lineage>
        <taxon>Bacteria</taxon>
        <taxon>Bacillati</taxon>
        <taxon>Actinomycetota</taxon>
        <taxon>Actinomycetes</taxon>
        <taxon>Kitasatosporales</taxon>
        <taxon>Streptomycetaceae</taxon>
        <taxon>Streptomyces</taxon>
        <taxon>Streptomyces albidoflavus group</taxon>
    </lineage>
</organism>
<gene>
    <name evidence="1" type="primary">dnaJ2</name>
    <name type="ordered locus">SCO2554</name>
    <name type="ORF">SCC77.21c</name>
</gene>
<evidence type="ECO:0000255" key="1">
    <source>
        <dbReference type="HAMAP-Rule" id="MF_01152"/>
    </source>
</evidence>
<evidence type="ECO:0000256" key="2">
    <source>
        <dbReference type="SAM" id="MobiDB-lite"/>
    </source>
</evidence>
<feature type="chain" id="PRO_0000070899" description="Chaperone protein DnaJ 2">
    <location>
        <begin position="1"/>
        <end position="378"/>
    </location>
</feature>
<feature type="domain" description="J" evidence="1">
    <location>
        <begin position="4"/>
        <end position="68"/>
    </location>
</feature>
<feature type="repeat" description="CXXCXGXG motif">
    <location>
        <begin position="143"/>
        <end position="150"/>
    </location>
</feature>
<feature type="repeat" description="CXXCXGXG motif">
    <location>
        <begin position="160"/>
        <end position="167"/>
    </location>
</feature>
<feature type="repeat" description="CXXCXGXG motif">
    <location>
        <begin position="186"/>
        <end position="193"/>
    </location>
</feature>
<feature type="repeat" description="CXXCXGXG motif">
    <location>
        <begin position="200"/>
        <end position="207"/>
    </location>
</feature>
<feature type="zinc finger region" description="CR-type" evidence="1">
    <location>
        <begin position="130"/>
        <end position="212"/>
    </location>
</feature>
<feature type="region of interest" description="Disordered" evidence="2">
    <location>
        <begin position="297"/>
        <end position="319"/>
    </location>
</feature>
<feature type="region of interest" description="Disordered" evidence="2">
    <location>
        <begin position="351"/>
        <end position="378"/>
    </location>
</feature>
<feature type="compositionally biased region" description="Polar residues" evidence="2">
    <location>
        <begin position="358"/>
        <end position="367"/>
    </location>
</feature>
<feature type="binding site" evidence="1">
    <location>
        <position position="143"/>
    </location>
    <ligand>
        <name>Zn(2+)</name>
        <dbReference type="ChEBI" id="CHEBI:29105"/>
        <label>1</label>
    </ligand>
</feature>
<feature type="binding site" evidence="1">
    <location>
        <position position="146"/>
    </location>
    <ligand>
        <name>Zn(2+)</name>
        <dbReference type="ChEBI" id="CHEBI:29105"/>
        <label>1</label>
    </ligand>
</feature>
<feature type="binding site" evidence="1">
    <location>
        <position position="160"/>
    </location>
    <ligand>
        <name>Zn(2+)</name>
        <dbReference type="ChEBI" id="CHEBI:29105"/>
        <label>2</label>
    </ligand>
</feature>
<feature type="binding site" evidence="1">
    <location>
        <position position="163"/>
    </location>
    <ligand>
        <name>Zn(2+)</name>
        <dbReference type="ChEBI" id="CHEBI:29105"/>
        <label>2</label>
    </ligand>
</feature>
<feature type="binding site" evidence="1">
    <location>
        <position position="186"/>
    </location>
    <ligand>
        <name>Zn(2+)</name>
        <dbReference type="ChEBI" id="CHEBI:29105"/>
        <label>2</label>
    </ligand>
</feature>
<feature type="binding site" evidence="1">
    <location>
        <position position="189"/>
    </location>
    <ligand>
        <name>Zn(2+)</name>
        <dbReference type="ChEBI" id="CHEBI:29105"/>
        <label>2</label>
    </ligand>
</feature>
<feature type="binding site" evidence="1">
    <location>
        <position position="200"/>
    </location>
    <ligand>
        <name>Zn(2+)</name>
        <dbReference type="ChEBI" id="CHEBI:29105"/>
        <label>1</label>
    </ligand>
</feature>
<feature type="binding site" evidence="1">
    <location>
        <position position="203"/>
    </location>
    <ligand>
        <name>Zn(2+)</name>
        <dbReference type="ChEBI" id="CHEBI:29105"/>
        <label>1</label>
    </ligand>
</feature>